<organism>
    <name type="scientific">Salmonella enteritidis PT4 (strain P125109)</name>
    <dbReference type="NCBI Taxonomy" id="550537"/>
    <lineage>
        <taxon>Bacteria</taxon>
        <taxon>Pseudomonadati</taxon>
        <taxon>Pseudomonadota</taxon>
        <taxon>Gammaproteobacteria</taxon>
        <taxon>Enterobacterales</taxon>
        <taxon>Enterobacteriaceae</taxon>
        <taxon>Salmonella</taxon>
    </lineage>
</organism>
<gene>
    <name evidence="1" type="primary">yciC</name>
    <name type="ordered locus">SEN1300</name>
</gene>
<protein>
    <recommendedName>
        <fullName evidence="1">UPF0259 membrane protein YciC</fullName>
    </recommendedName>
</protein>
<comment type="subcellular location">
    <subcellularLocation>
        <location evidence="1">Cell inner membrane</location>
        <topology evidence="1">Multi-pass membrane protein</topology>
    </subcellularLocation>
</comment>
<comment type="similarity">
    <text evidence="1">Belongs to the UPF0259 family.</text>
</comment>
<evidence type="ECO:0000255" key="1">
    <source>
        <dbReference type="HAMAP-Rule" id="MF_01067"/>
    </source>
</evidence>
<reference key="1">
    <citation type="journal article" date="2008" name="Genome Res.">
        <title>Comparative genome analysis of Salmonella enteritidis PT4 and Salmonella gallinarum 287/91 provides insights into evolutionary and host adaptation pathways.</title>
        <authorList>
            <person name="Thomson N.R."/>
            <person name="Clayton D.J."/>
            <person name="Windhorst D."/>
            <person name="Vernikos G."/>
            <person name="Davidson S."/>
            <person name="Churcher C."/>
            <person name="Quail M.A."/>
            <person name="Stevens M."/>
            <person name="Jones M.A."/>
            <person name="Watson M."/>
            <person name="Barron A."/>
            <person name="Layton A."/>
            <person name="Pickard D."/>
            <person name="Kingsley R.A."/>
            <person name="Bignell A."/>
            <person name="Clark L."/>
            <person name="Harris B."/>
            <person name="Ormond D."/>
            <person name="Abdellah Z."/>
            <person name="Brooks K."/>
            <person name="Cherevach I."/>
            <person name="Chillingworth T."/>
            <person name="Woodward J."/>
            <person name="Norberczak H."/>
            <person name="Lord A."/>
            <person name="Arrowsmith C."/>
            <person name="Jagels K."/>
            <person name="Moule S."/>
            <person name="Mungall K."/>
            <person name="Saunders M."/>
            <person name="Whitehead S."/>
            <person name="Chabalgoity J.A."/>
            <person name="Maskell D."/>
            <person name="Humphreys T."/>
            <person name="Roberts M."/>
            <person name="Barrow P.A."/>
            <person name="Dougan G."/>
            <person name="Parkhill J."/>
        </authorList>
    </citation>
    <scope>NUCLEOTIDE SEQUENCE [LARGE SCALE GENOMIC DNA]</scope>
    <source>
        <strain>P125109</strain>
    </source>
</reference>
<proteinExistence type="inferred from homology"/>
<name>YCIC_SALEP</name>
<accession>B5R3N6</accession>
<feature type="chain" id="PRO_1000136590" description="UPF0259 membrane protein YciC">
    <location>
        <begin position="1"/>
        <end position="247"/>
    </location>
</feature>
<feature type="transmembrane region" description="Helical" evidence="1">
    <location>
        <begin position="20"/>
        <end position="40"/>
    </location>
</feature>
<feature type="transmembrane region" description="Helical" evidence="1">
    <location>
        <begin position="87"/>
        <end position="107"/>
    </location>
</feature>
<feature type="transmembrane region" description="Helical" evidence="1">
    <location>
        <begin position="118"/>
        <end position="140"/>
    </location>
</feature>
<feature type="transmembrane region" description="Helical" evidence="1">
    <location>
        <begin position="152"/>
        <end position="172"/>
    </location>
</feature>
<feature type="transmembrane region" description="Helical" evidence="1">
    <location>
        <begin position="194"/>
        <end position="214"/>
    </location>
</feature>
<feature type="transmembrane region" description="Helical" evidence="1">
    <location>
        <begin position="219"/>
        <end position="239"/>
    </location>
</feature>
<keyword id="KW-0997">Cell inner membrane</keyword>
<keyword id="KW-1003">Cell membrane</keyword>
<keyword id="KW-0472">Membrane</keyword>
<keyword id="KW-0812">Transmembrane</keyword>
<keyword id="KW-1133">Transmembrane helix</keyword>
<sequence>MSITAKSVYRDAGNFFRNQFITILLVSLLCAFITVVLGHAFSPSDAQIAQLSEGEHLAGSAGLFELVQNMTPEQQQILLRASAASTFSGLIGNAILAGGIILMIQLVSAGHRVSALRAIGASAPALPKLFILIFLTTLLVQIGIMLIVVPGIIMAIVLALAPVMLVEEKMGVFAAMRSSMRLAWANMRLVAPAVIGWLLAKTLLLLFAPSFAVLTPNVGAVLANTLSNLISAVLLIYLFRLYMLIRQ</sequence>
<dbReference type="EMBL" id="AM933172">
    <property type="protein sequence ID" value="CAR32878.1"/>
    <property type="molecule type" value="Genomic_DNA"/>
</dbReference>
<dbReference type="RefSeq" id="WP_000028507.1">
    <property type="nucleotide sequence ID" value="NC_011294.1"/>
</dbReference>
<dbReference type="KEGG" id="set:SEN1300"/>
<dbReference type="HOGENOM" id="CLU_073287_0_0_6"/>
<dbReference type="Proteomes" id="UP000000613">
    <property type="component" value="Chromosome"/>
</dbReference>
<dbReference type="GO" id="GO:0005886">
    <property type="term" value="C:plasma membrane"/>
    <property type="evidence" value="ECO:0007669"/>
    <property type="project" value="UniProtKB-SubCell"/>
</dbReference>
<dbReference type="HAMAP" id="MF_01067">
    <property type="entry name" value="UPF0259"/>
    <property type="match status" value="1"/>
</dbReference>
<dbReference type="InterPro" id="IPR009627">
    <property type="entry name" value="UPF0259"/>
</dbReference>
<dbReference type="NCBIfam" id="NF002774">
    <property type="entry name" value="PRK02868.1"/>
    <property type="match status" value="1"/>
</dbReference>
<dbReference type="Pfam" id="PF06790">
    <property type="entry name" value="UPF0259"/>
    <property type="match status" value="1"/>
</dbReference>